<organism>
    <name type="scientific">Homo sapiens</name>
    <name type="common">Human</name>
    <dbReference type="NCBI Taxonomy" id="9606"/>
    <lineage>
        <taxon>Eukaryota</taxon>
        <taxon>Metazoa</taxon>
        <taxon>Chordata</taxon>
        <taxon>Craniata</taxon>
        <taxon>Vertebrata</taxon>
        <taxon>Euteleostomi</taxon>
        <taxon>Mammalia</taxon>
        <taxon>Eutheria</taxon>
        <taxon>Euarchontoglires</taxon>
        <taxon>Primates</taxon>
        <taxon>Haplorrhini</taxon>
        <taxon>Catarrhini</taxon>
        <taxon>Hominidae</taxon>
        <taxon>Homo</taxon>
    </lineage>
</organism>
<sequence length="133" mass="15284">MGSSGLLSLLVLFVLLANVQGPGLTDWLFPRRCPKIREECEFQERDVCTKDRQCQDNKKCCVFSCGKKCLDLKQDVCEMPKETGPCLAYFLHWWYDKKDNTCSMFVYGGCQGNNNNFQSKANCLNTCKNKRFP</sequence>
<accession>O95925</accession>
<accession>A6PVD6</accession>
<accession>Q86TP9</accession>
<accession>Q96SD7</accession>
<accession>Q9HD30</accession>
<dbReference type="EMBL" id="AF286368">
    <property type="protein sequence ID" value="AAG00546.1"/>
    <property type="molecule type" value="mRNA"/>
</dbReference>
<dbReference type="EMBL" id="AF286369">
    <property type="protein sequence ID" value="AAG00547.1"/>
    <property type="molecule type" value="mRNA"/>
</dbReference>
<dbReference type="EMBL" id="AF286370">
    <property type="protein sequence ID" value="AAG00548.1"/>
    <property type="molecule type" value="mRNA"/>
</dbReference>
<dbReference type="EMBL" id="AL118493">
    <property type="protein sequence ID" value="CAB56343.1"/>
    <property type="molecule type" value="mRNA"/>
</dbReference>
<dbReference type="EMBL" id="AK301937">
    <property type="protein sequence ID" value="BAG63357.1"/>
    <property type="molecule type" value="mRNA"/>
</dbReference>
<dbReference type="EMBL" id="AL031663">
    <property type="status" value="NOT_ANNOTATED_CDS"/>
    <property type="molecule type" value="Genomic_DNA"/>
</dbReference>
<dbReference type="EMBL" id="BC044829">
    <property type="protein sequence ID" value="AAH44829.2"/>
    <property type="molecule type" value="mRNA"/>
</dbReference>
<dbReference type="EMBL" id="BC053369">
    <property type="protein sequence ID" value="AAH53369.1"/>
    <property type="molecule type" value="mRNA"/>
</dbReference>
<dbReference type="CCDS" id="CCDS13359.1">
    <molecule id="O95925-1"/>
</dbReference>
<dbReference type="RefSeq" id="NP_001185915.1">
    <molecule id="O95925-3"/>
    <property type="nucleotide sequence ID" value="NM_001198986.1"/>
</dbReference>
<dbReference type="RefSeq" id="NP_001289790.1">
    <property type="nucleotide sequence ID" value="NM_001302861.1"/>
</dbReference>
<dbReference type="RefSeq" id="NP_065131.1">
    <molecule id="O95925-1"/>
    <property type="nucleotide sequence ID" value="NM_020398.4"/>
</dbReference>
<dbReference type="SMR" id="O95925"/>
<dbReference type="BioGRID" id="121383">
    <property type="interactions" value="53"/>
</dbReference>
<dbReference type="FunCoup" id="O95925">
    <property type="interactions" value="5"/>
</dbReference>
<dbReference type="IntAct" id="O95925">
    <property type="interactions" value="4"/>
</dbReference>
<dbReference type="STRING" id="9606.ENSP00000361746"/>
<dbReference type="MEROPS" id="I02.058"/>
<dbReference type="MEROPS" id="I17.953"/>
<dbReference type="BioMuta" id="EPPIN"/>
<dbReference type="MassIVE" id="O95925"/>
<dbReference type="PaxDb" id="9606-ENSP00000361746"/>
<dbReference type="PeptideAtlas" id="O95925"/>
<dbReference type="ProteomicsDB" id="51127">
    <molecule id="O95925-1"/>
</dbReference>
<dbReference type="ProteomicsDB" id="51128">
    <molecule id="O95925-2"/>
</dbReference>
<dbReference type="ProteomicsDB" id="51129">
    <molecule id="O95925-3"/>
</dbReference>
<dbReference type="Antibodypedia" id="34909">
    <property type="antibodies" value="94 antibodies from 19 providers"/>
</dbReference>
<dbReference type="Antibodypedia" id="76905">
    <property type="antibodies" value="17 antibodies from 3 providers"/>
</dbReference>
<dbReference type="DNASU" id="57119"/>
<dbReference type="Ensembl" id="ENST00000336443.3">
    <molecule id="O95925-2"/>
    <property type="protein sequence ID" value="ENSP00000338114.3"/>
    <property type="gene ID" value="ENSG00000101448.14"/>
</dbReference>
<dbReference type="Ensembl" id="ENST00000354280.9">
    <molecule id="O95925-1"/>
    <property type="protein sequence ID" value="ENSP00000361746.4"/>
    <property type="gene ID" value="ENSG00000101448.14"/>
</dbReference>
<dbReference type="Ensembl" id="ENST00000504988.1">
    <molecule id="O95925-3"/>
    <property type="protein sequence ID" value="ENSP00000424176.1"/>
    <property type="gene ID" value="ENSG00000249139.2"/>
</dbReference>
<dbReference type="GeneID" id="57119"/>
<dbReference type="KEGG" id="hsa:100526773"/>
<dbReference type="KEGG" id="hsa:57119"/>
<dbReference type="MANE-Select" id="ENST00000354280.9">
    <property type="protein sequence ID" value="ENSP00000361746.4"/>
    <property type="RefSeq nucleotide sequence ID" value="NM_020398.4"/>
    <property type="RefSeq protein sequence ID" value="NP_065131.1"/>
</dbReference>
<dbReference type="UCSC" id="uc002xou.4">
    <molecule id="O95925-1"/>
    <property type="organism name" value="human"/>
</dbReference>
<dbReference type="AGR" id="HGNC:15932"/>
<dbReference type="AGR" id="HGNC:38825"/>
<dbReference type="CTD" id="100526773"/>
<dbReference type="CTD" id="57119"/>
<dbReference type="DisGeNET" id="100526773"/>
<dbReference type="DisGeNET" id="57119"/>
<dbReference type="GeneCards" id="EPPIN"/>
<dbReference type="GeneCards" id="EPPIN-WFDC6"/>
<dbReference type="HGNC" id="HGNC:15932">
    <property type="gene designation" value="EPPIN"/>
</dbReference>
<dbReference type="HGNC" id="HGNC:38825">
    <property type="gene designation" value="EPPIN-WFDC6"/>
</dbReference>
<dbReference type="HPA" id="ENSG00000101448">
    <property type="expression patterns" value="Group enriched (epididymis, testis)"/>
</dbReference>
<dbReference type="HPA" id="ENSG00000249139">
    <property type="expression patterns" value="Group enriched (epididymis, testis)"/>
</dbReference>
<dbReference type="MIM" id="609031">
    <property type="type" value="gene"/>
</dbReference>
<dbReference type="neXtProt" id="NX_O95925"/>
<dbReference type="OpenTargets" id="ENSG00000101448"/>
<dbReference type="OpenTargets" id="ENSG00000249139"/>
<dbReference type="PharmGKB" id="PA38054"/>
<dbReference type="VEuPathDB" id="HostDB:ENSG00000101448"/>
<dbReference type="VEuPathDB" id="HostDB:ENSG00000249139"/>
<dbReference type="eggNOG" id="KOG4295">
    <property type="taxonomic scope" value="Eukaryota"/>
</dbReference>
<dbReference type="GeneTree" id="ENSGT00940000156753"/>
<dbReference type="HOGENOM" id="CLU_127181_0_0_1"/>
<dbReference type="InParanoid" id="O95925"/>
<dbReference type="OMA" id="CPKVKVH"/>
<dbReference type="OrthoDB" id="9473830at2759"/>
<dbReference type="PAN-GO" id="O95925">
    <property type="GO annotations" value="2 GO annotations based on evolutionary models"/>
</dbReference>
<dbReference type="PhylomeDB" id="O95925"/>
<dbReference type="TreeFam" id="TF342459"/>
<dbReference type="PathwayCommons" id="O95925"/>
<dbReference type="Reactome" id="R-HSA-6803157">
    <property type="pathway name" value="Antimicrobial peptides"/>
</dbReference>
<dbReference type="SignaLink" id="O95925"/>
<dbReference type="BioGRID-ORCS" id="100526773">
    <property type="hits" value="11 hits in 1011 CRISPR screens"/>
</dbReference>
<dbReference type="BioGRID-ORCS" id="57119">
    <property type="hits" value="7 hits in 1024 CRISPR screens"/>
</dbReference>
<dbReference type="GeneWiki" id="SPINLW1"/>
<dbReference type="Pharos" id="O95925">
    <property type="development level" value="Tbio"/>
</dbReference>
<dbReference type="PRO" id="PR:O95925"/>
<dbReference type="Proteomes" id="UP000005640">
    <property type="component" value="Chromosome 20"/>
</dbReference>
<dbReference type="RNAct" id="O95925">
    <property type="molecule type" value="protein"/>
</dbReference>
<dbReference type="Bgee" id="ENSG00000101448">
    <property type="expression patterns" value="Expressed in right testis and 73 other cell types or tissues"/>
</dbReference>
<dbReference type="ExpressionAtlas" id="O95925">
    <property type="expression patterns" value="baseline and differential"/>
</dbReference>
<dbReference type="GO" id="GO:0001669">
    <property type="term" value="C:acrosomal vesicle"/>
    <property type="evidence" value="ECO:0007669"/>
    <property type="project" value="Ensembl"/>
</dbReference>
<dbReference type="GO" id="GO:0009986">
    <property type="term" value="C:cell surface"/>
    <property type="evidence" value="ECO:0000314"/>
    <property type="project" value="UniProtKB"/>
</dbReference>
<dbReference type="GO" id="GO:0005615">
    <property type="term" value="C:extracellular space"/>
    <property type="evidence" value="ECO:0000314"/>
    <property type="project" value="UniProtKB"/>
</dbReference>
<dbReference type="GO" id="GO:0032991">
    <property type="term" value="C:protein-containing complex"/>
    <property type="evidence" value="ECO:0000314"/>
    <property type="project" value="UniProtKB"/>
</dbReference>
<dbReference type="GO" id="GO:0097524">
    <property type="term" value="C:sperm plasma membrane"/>
    <property type="evidence" value="ECO:0000304"/>
    <property type="project" value="Reactome"/>
</dbReference>
<dbReference type="GO" id="GO:0004867">
    <property type="term" value="F:serine-type endopeptidase inhibitor activity"/>
    <property type="evidence" value="ECO:0007669"/>
    <property type="project" value="UniProtKB-KW"/>
</dbReference>
<dbReference type="GO" id="GO:0042742">
    <property type="term" value="P:defense response to bacterium"/>
    <property type="evidence" value="ECO:0000314"/>
    <property type="project" value="UniProtKB"/>
</dbReference>
<dbReference type="GO" id="GO:0090281">
    <property type="term" value="P:negative regulation of calcium ion import"/>
    <property type="evidence" value="ECO:0000315"/>
    <property type="project" value="UniProtKB"/>
</dbReference>
<dbReference type="GO" id="GO:1901318">
    <property type="term" value="P:negative regulation of flagellated sperm motility"/>
    <property type="evidence" value="ECO:0000315"/>
    <property type="project" value="UniProtKB"/>
</dbReference>
<dbReference type="GO" id="GO:0010466">
    <property type="term" value="P:negative regulation of peptidase activity"/>
    <property type="evidence" value="ECO:0000314"/>
    <property type="project" value="UniProtKB"/>
</dbReference>
<dbReference type="CDD" id="cd22611">
    <property type="entry name" value="Kunitz_eppin"/>
    <property type="match status" value="1"/>
</dbReference>
<dbReference type="FunFam" id="4.10.410.10:FF:000015">
    <property type="entry name" value="WAP four-disulfide core domain 6A"/>
    <property type="match status" value="1"/>
</dbReference>
<dbReference type="FunFam" id="4.10.75.10:FF:000004">
    <property type="entry name" value="WAP four-disulfide core domain 6A"/>
    <property type="match status" value="1"/>
</dbReference>
<dbReference type="Gene3D" id="4.10.75.10">
    <property type="entry name" value="Elafin-like"/>
    <property type="match status" value="1"/>
</dbReference>
<dbReference type="Gene3D" id="4.10.410.10">
    <property type="entry name" value="Pancreatic trypsin inhibitor Kunitz domain"/>
    <property type="match status" value="1"/>
</dbReference>
<dbReference type="InterPro" id="IPR036645">
    <property type="entry name" value="Elafin-like_sf"/>
</dbReference>
<dbReference type="InterPro" id="IPR002223">
    <property type="entry name" value="Kunitz_BPTI"/>
</dbReference>
<dbReference type="InterPro" id="IPR036880">
    <property type="entry name" value="Kunitz_BPTI_sf"/>
</dbReference>
<dbReference type="InterPro" id="IPR020901">
    <property type="entry name" value="Prtase_inh_Kunz-CS"/>
</dbReference>
<dbReference type="InterPro" id="IPR051388">
    <property type="entry name" value="Serpin_venom_toxin"/>
</dbReference>
<dbReference type="InterPro" id="IPR008197">
    <property type="entry name" value="WAP_dom"/>
</dbReference>
<dbReference type="PANTHER" id="PTHR46751">
    <property type="entry name" value="EPPIN"/>
    <property type="match status" value="1"/>
</dbReference>
<dbReference type="PANTHER" id="PTHR46751:SF2">
    <property type="entry name" value="EPPIN"/>
    <property type="match status" value="1"/>
</dbReference>
<dbReference type="Pfam" id="PF00014">
    <property type="entry name" value="Kunitz_BPTI"/>
    <property type="match status" value="1"/>
</dbReference>
<dbReference type="Pfam" id="PF00095">
    <property type="entry name" value="WAP"/>
    <property type="match status" value="1"/>
</dbReference>
<dbReference type="PRINTS" id="PR00759">
    <property type="entry name" value="BASICPTASE"/>
</dbReference>
<dbReference type="SMART" id="SM00131">
    <property type="entry name" value="KU"/>
    <property type="match status" value="1"/>
</dbReference>
<dbReference type="SMART" id="SM00217">
    <property type="entry name" value="WAP"/>
    <property type="match status" value="1"/>
</dbReference>
<dbReference type="SUPFAM" id="SSF57362">
    <property type="entry name" value="BPTI-like"/>
    <property type="match status" value="1"/>
</dbReference>
<dbReference type="SUPFAM" id="SSF57256">
    <property type="entry name" value="Elafin-like"/>
    <property type="match status" value="1"/>
</dbReference>
<dbReference type="PROSITE" id="PS00280">
    <property type="entry name" value="BPTI_KUNITZ_1"/>
    <property type="match status" value="1"/>
</dbReference>
<dbReference type="PROSITE" id="PS50279">
    <property type="entry name" value="BPTI_KUNITZ_2"/>
    <property type="match status" value="1"/>
</dbReference>
<dbReference type="PROSITE" id="PS51390">
    <property type="entry name" value="WAP"/>
    <property type="match status" value="1"/>
</dbReference>
<keyword id="KW-0025">Alternative splicing</keyword>
<keyword id="KW-0929">Antimicrobial</keyword>
<keyword id="KW-1015">Disulfide bond</keyword>
<keyword id="KW-0646">Protease inhibitor</keyword>
<keyword id="KW-1267">Proteomics identification</keyword>
<keyword id="KW-1185">Reference proteome</keyword>
<keyword id="KW-0964">Secreted</keyword>
<keyword id="KW-0722">Serine protease inhibitor</keyword>
<keyword id="KW-0732">Signal</keyword>
<reference key="1">
    <citation type="journal article" date="2001" name="Gene">
        <title>Cloning and sequencing of human eppin: a novel family of protease inhibitors expressed in the epididymis and testis.</title>
        <authorList>
            <person name="Richardson R.T."/>
            <person name="Sivashanmugam P."/>
            <person name="Hall S.H."/>
            <person name="Hamil K.G."/>
            <person name="Moore P.A."/>
            <person name="Ruben S.M."/>
            <person name="French F.S."/>
            <person name="O'Rand M.G."/>
        </authorList>
    </citation>
    <scope>NUCLEOTIDE SEQUENCE [MRNA] (ISOFORMS 1 AND 2)</scope>
    <scope>SUBUNIT</scope>
    <scope>TISSUE SPECIFICITY</scope>
    <source>
        <tissue>Epididymis</tissue>
        <tissue>Testis</tissue>
    </source>
</reference>
<reference key="2">
    <citation type="submission" date="1999-09" db="EMBL/GenBank/DDBJ databases">
        <authorList>
            <person name="Stavrides G.S."/>
            <person name="Huckle E.J."/>
            <person name="Deloukas P."/>
        </authorList>
    </citation>
    <scope>NUCLEOTIDE SEQUENCE [MRNA] (ISOFORM 1)</scope>
</reference>
<reference key="3">
    <citation type="journal article" date="2004" name="Nat. Genet.">
        <title>Complete sequencing and characterization of 21,243 full-length human cDNAs.</title>
        <authorList>
            <person name="Ota T."/>
            <person name="Suzuki Y."/>
            <person name="Nishikawa T."/>
            <person name="Otsuki T."/>
            <person name="Sugiyama T."/>
            <person name="Irie R."/>
            <person name="Wakamatsu A."/>
            <person name="Hayashi K."/>
            <person name="Sato H."/>
            <person name="Nagai K."/>
            <person name="Kimura K."/>
            <person name="Makita H."/>
            <person name="Sekine M."/>
            <person name="Obayashi M."/>
            <person name="Nishi T."/>
            <person name="Shibahara T."/>
            <person name="Tanaka T."/>
            <person name="Ishii S."/>
            <person name="Yamamoto J."/>
            <person name="Saito K."/>
            <person name="Kawai Y."/>
            <person name="Isono Y."/>
            <person name="Nakamura Y."/>
            <person name="Nagahari K."/>
            <person name="Murakami K."/>
            <person name="Yasuda T."/>
            <person name="Iwayanagi T."/>
            <person name="Wagatsuma M."/>
            <person name="Shiratori A."/>
            <person name="Sudo H."/>
            <person name="Hosoiri T."/>
            <person name="Kaku Y."/>
            <person name="Kodaira H."/>
            <person name="Kondo H."/>
            <person name="Sugawara M."/>
            <person name="Takahashi M."/>
            <person name="Kanda K."/>
            <person name="Yokoi T."/>
            <person name="Furuya T."/>
            <person name="Kikkawa E."/>
            <person name="Omura Y."/>
            <person name="Abe K."/>
            <person name="Kamihara K."/>
            <person name="Katsuta N."/>
            <person name="Sato K."/>
            <person name="Tanikawa M."/>
            <person name="Yamazaki M."/>
            <person name="Ninomiya K."/>
            <person name="Ishibashi T."/>
            <person name="Yamashita H."/>
            <person name="Murakawa K."/>
            <person name="Fujimori K."/>
            <person name="Tanai H."/>
            <person name="Kimata M."/>
            <person name="Watanabe M."/>
            <person name="Hiraoka S."/>
            <person name="Chiba Y."/>
            <person name="Ishida S."/>
            <person name="Ono Y."/>
            <person name="Takiguchi S."/>
            <person name="Watanabe S."/>
            <person name="Yosida M."/>
            <person name="Hotuta T."/>
            <person name="Kusano J."/>
            <person name="Kanehori K."/>
            <person name="Takahashi-Fujii A."/>
            <person name="Hara H."/>
            <person name="Tanase T.-O."/>
            <person name="Nomura Y."/>
            <person name="Togiya S."/>
            <person name="Komai F."/>
            <person name="Hara R."/>
            <person name="Takeuchi K."/>
            <person name="Arita M."/>
            <person name="Imose N."/>
            <person name="Musashino K."/>
            <person name="Yuuki H."/>
            <person name="Oshima A."/>
            <person name="Sasaki N."/>
            <person name="Aotsuka S."/>
            <person name="Yoshikawa Y."/>
            <person name="Matsunawa H."/>
            <person name="Ichihara T."/>
            <person name="Shiohata N."/>
            <person name="Sano S."/>
            <person name="Moriya S."/>
            <person name="Momiyama H."/>
            <person name="Satoh N."/>
            <person name="Takami S."/>
            <person name="Terashima Y."/>
            <person name="Suzuki O."/>
            <person name="Nakagawa S."/>
            <person name="Senoh A."/>
            <person name="Mizoguchi H."/>
            <person name="Goto Y."/>
            <person name="Shimizu F."/>
            <person name="Wakebe H."/>
            <person name="Hishigaki H."/>
            <person name="Watanabe T."/>
            <person name="Sugiyama A."/>
            <person name="Takemoto M."/>
            <person name="Kawakami B."/>
            <person name="Yamazaki M."/>
            <person name="Watanabe K."/>
            <person name="Kumagai A."/>
            <person name="Itakura S."/>
            <person name="Fukuzumi Y."/>
            <person name="Fujimori Y."/>
            <person name="Komiyama M."/>
            <person name="Tashiro H."/>
            <person name="Tanigami A."/>
            <person name="Fujiwara T."/>
            <person name="Ono T."/>
            <person name="Yamada K."/>
            <person name="Fujii Y."/>
            <person name="Ozaki K."/>
            <person name="Hirao M."/>
            <person name="Ohmori Y."/>
            <person name="Kawabata A."/>
            <person name="Hikiji T."/>
            <person name="Kobatake N."/>
            <person name="Inagaki H."/>
            <person name="Ikema Y."/>
            <person name="Okamoto S."/>
            <person name="Okitani R."/>
            <person name="Kawakami T."/>
            <person name="Noguchi S."/>
            <person name="Itoh T."/>
            <person name="Shigeta K."/>
            <person name="Senba T."/>
            <person name="Matsumura K."/>
            <person name="Nakajima Y."/>
            <person name="Mizuno T."/>
            <person name="Morinaga M."/>
            <person name="Sasaki M."/>
            <person name="Togashi T."/>
            <person name="Oyama M."/>
            <person name="Hata H."/>
            <person name="Watanabe M."/>
            <person name="Komatsu T."/>
            <person name="Mizushima-Sugano J."/>
            <person name="Satoh T."/>
            <person name="Shirai Y."/>
            <person name="Takahashi Y."/>
            <person name="Nakagawa K."/>
            <person name="Okumura K."/>
            <person name="Nagase T."/>
            <person name="Nomura N."/>
            <person name="Kikuchi H."/>
            <person name="Masuho Y."/>
            <person name="Yamashita R."/>
            <person name="Nakai K."/>
            <person name="Yada T."/>
            <person name="Nakamura Y."/>
            <person name="Ohara O."/>
            <person name="Isogai T."/>
            <person name="Sugano S."/>
        </authorList>
    </citation>
    <scope>NUCLEOTIDE SEQUENCE [LARGE SCALE MRNA] (ISOFORM 3)</scope>
    <source>
        <tissue>Testis</tissue>
    </source>
</reference>
<reference key="4">
    <citation type="journal article" date="2001" name="Nature">
        <title>The DNA sequence and comparative analysis of human chromosome 20.</title>
        <authorList>
            <person name="Deloukas P."/>
            <person name="Matthews L.H."/>
            <person name="Ashurst J.L."/>
            <person name="Burton J."/>
            <person name="Gilbert J.G.R."/>
            <person name="Jones M."/>
            <person name="Stavrides G."/>
            <person name="Almeida J.P."/>
            <person name="Babbage A.K."/>
            <person name="Bagguley C.L."/>
            <person name="Bailey J."/>
            <person name="Barlow K.F."/>
            <person name="Bates K.N."/>
            <person name="Beard L.M."/>
            <person name="Beare D.M."/>
            <person name="Beasley O.P."/>
            <person name="Bird C.P."/>
            <person name="Blakey S.E."/>
            <person name="Bridgeman A.M."/>
            <person name="Brown A.J."/>
            <person name="Buck D."/>
            <person name="Burrill W.D."/>
            <person name="Butler A.P."/>
            <person name="Carder C."/>
            <person name="Carter N.P."/>
            <person name="Chapman J.C."/>
            <person name="Clamp M."/>
            <person name="Clark G."/>
            <person name="Clark L.N."/>
            <person name="Clark S.Y."/>
            <person name="Clee C.M."/>
            <person name="Clegg S."/>
            <person name="Cobley V.E."/>
            <person name="Collier R.E."/>
            <person name="Connor R.E."/>
            <person name="Corby N.R."/>
            <person name="Coulson A."/>
            <person name="Coville G.J."/>
            <person name="Deadman R."/>
            <person name="Dhami P.D."/>
            <person name="Dunn M."/>
            <person name="Ellington A.G."/>
            <person name="Frankland J.A."/>
            <person name="Fraser A."/>
            <person name="French L."/>
            <person name="Garner P."/>
            <person name="Grafham D.V."/>
            <person name="Griffiths C."/>
            <person name="Griffiths M.N.D."/>
            <person name="Gwilliam R."/>
            <person name="Hall R.E."/>
            <person name="Hammond S."/>
            <person name="Harley J.L."/>
            <person name="Heath P.D."/>
            <person name="Ho S."/>
            <person name="Holden J.L."/>
            <person name="Howden P.J."/>
            <person name="Huckle E."/>
            <person name="Hunt A.R."/>
            <person name="Hunt S.E."/>
            <person name="Jekosch K."/>
            <person name="Johnson C.M."/>
            <person name="Johnson D."/>
            <person name="Kay M.P."/>
            <person name="Kimberley A.M."/>
            <person name="King A."/>
            <person name="Knights A."/>
            <person name="Laird G.K."/>
            <person name="Lawlor S."/>
            <person name="Lehvaeslaiho M.H."/>
            <person name="Leversha M.A."/>
            <person name="Lloyd C."/>
            <person name="Lloyd D.M."/>
            <person name="Lovell J.D."/>
            <person name="Marsh V.L."/>
            <person name="Martin S.L."/>
            <person name="McConnachie L.J."/>
            <person name="McLay K."/>
            <person name="McMurray A.A."/>
            <person name="Milne S.A."/>
            <person name="Mistry D."/>
            <person name="Moore M.J.F."/>
            <person name="Mullikin J.C."/>
            <person name="Nickerson T."/>
            <person name="Oliver K."/>
            <person name="Parker A."/>
            <person name="Patel R."/>
            <person name="Pearce T.A.V."/>
            <person name="Peck A.I."/>
            <person name="Phillimore B.J.C.T."/>
            <person name="Prathalingam S.R."/>
            <person name="Plumb R.W."/>
            <person name="Ramsay H."/>
            <person name="Rice C.M."/>
            <person name="Ross M.T."/>
            <person name="Scott C.E."/>
            <person name="Sehra H.K."/>
            <person name="Shownkeen R."/>
            <person name="Sims S."/>
            <person name="Skuce C.D."/>
            <person name="Smith M.L."/>
            <person name="Soderlund C."/>
            <person name="Steward C.A."/>
            <person name="Sulston J.E."/>
            <person name="Swann R.M."/>
            <person name="Sycamore N."/>
            <person name="Taylor R."/>
            <person name="Tee L."/>
            <person name="Thomas D.W."/>
            <person name="Thorpe A."/>
            <person name="Tracey A."/>
            <person name="Tromans A.C."/>
            <person name="Vaudin M."/>
            <person name="Wall M."/>
            <person name="Wallis J.M."/>
            <person name="Whitehead S.L."/>
            <person name="Whittaker P."/>
            <person name="Willey D.L."/>
            <person name="Williams L."/>
            <person name="Williams S.A."/>
            <person name="Wilming L."/>
            <person name="Wray P.W."/>
            <person name="Hubbard T."/>
            <person name="Durbin R.M."/>
            <person name="Bentley D.R."/>
            <person name="Beck S."/>
            <person name="Rogers J."/>
        </authorList>
    </citation>
    <scope>NUCLEOTIDE SEQUENCE [LARGE SCALE GENOMIC DNA]</scope>
</reference>
<reference key="5">
    <citation type="journal article" date="2004" name="Genome Res.">
        <title>The status, quality, and expansion of the NIH full-length cDNA project: the Mammalian Gene Collection (MGC).</title>
        <authorList>
            <consortium name="The MGC Project Team"/>
        </authorList>
    </citation>
    <scope>NUCLEOTIDE SEQUENCE [LARGE SCALE MRNA] (ISOFORM 1)</scope>
    <source>
        <tissue>Brain</tissue>
    </source>
</reference>
<reference key="6">
    <citation type="journal article" date="2004" name="Biol. Reprod.">
        <title>Antimicrobial activity of human EPPIN, an androgen-regulated, sperm-bound protein with a whey acidic protein motif.</title>
        <authorList>
            <person name="Yenugu S."/>
            <person name="Richardson R.T."/>
            <person name="Sivashanmugam P."/>
            <person name="Wang Z."/>
            <person name="O'rand M.G."/>
            <person name="French F.S."/>
            <person name="Hall S.H."/>
        </authorList>
    </citation>
    <scope>FUNCTION</scope>
</reference>
<reference key="7">
    <citation type="journal article" date="2005" name="Biol. Reprod.">
        <title>Association of eppin with semenogelin on human spermatozoa.</title>
        <authorList>
            <person name="Wang Z."/>
            <person name="Widgren E.E."/>
            <person name="Sivashanmugam P."/>
            <person name="O'Rand M.G."/>
            <person name="Richardson R.T."/>
        </authorList>
    </citation>
    <scope>INTERACTION WITH SEMG1</scope>
    <scope>SUBCELLULAR LOCATION</scope>
    <scope>SUBUNIT</scope>
</reference>
<reference key="8">
    <citation type="journal article" date="2007" name="Biol. Reprod.">
        <title>Characterization of an eppin protein complex from human semen and spermatozoa.</title>
        <authorList>
            <person name="Wang Z."/>
            <person name="Widgren E.E."/>
            <person name="Richardson R.T."/>
            <person name="O'Rand M.G."/>
        </authorList>
    </citation>
    <scope>IDENTIFICATION IN A COMPLEX WITH LTF AND CLU</scope>
    <scope>IDENTIFICATION BY MASS SPECTROMETRY</scope>
</reference>
<reference key="9">
    <citation type="journal article" date="2007" name="Soc. Reprod. Fertil. Suppl.">
        <title>Eppin: a molecular strategy for male contraception.</title>
        <authorList>
            <person name="Wang Z."/>
            <person name="Widgren E.E."/>
            <person name="Richardson R.T."/>
            <person name="Orand M.G."/>
        </authorList>
    </citation>
    <scope>FUNCTION ON KLK3 ACTIVITY</scope>
    <scope>MUTAGENESIS OF LEU-87</scope>
</reference>
<reference key="10">
    <citation type="journal article" date="2008" name="FEBS J.">
        <title>Functional domains of the human epididymal protease inhibitor, eppin.</title>
        <authorList>
            <person name="McCrudden M.T."/>
            <person name="Dafforn T.R."/>
            <person name="Houston D.F."/>
            <person name="Turkington P.T."/>
            <person name="Timson D.J."/>
        </authorList>
    </citation>
    <scope>DOMAIN</scope>
</reference>
<reference key="11">
    <citation type="journal article" date="2011" name="Mol. Med. Report.">
        <title>Distribution of Eppin in mouse and human testis.</title>
        <authorList>
            <person name="Long Y."/>
            <person name="Gu A."/>
            <person name="Yang H."/>
            <person name="Ji G."/>
            <person name="Han X."/>
            <person name="Song L."/>
            <person name="Wang S."/>
            <person name="Wang X."/>
        </authorList>
    </citation>
    <scope>TISSUE SPECIFICITY</scope>
    <scope>SUBCELLULAR LOCATION</scope>
</reference>
<reference key="12">
    <citation type="journal article" date="2012" name="Biol. Reprod.">
        <title>Characterization of EPPIN's semenogelin I binding Site: a contraceptive drug target.</title>
        <authorList>
            <person name="Silva E.J."/>
            <person name="Hamil K.G."/>
            <person name="Richardson R.T."/>
            <person name="O'Rand M.G."/>
        </authorList>
    </citation>
    <scope>INTERACTION WITH LTF AND SEMG1</scope>
    <scope>MUTAGENESIS OF CYS-102; TYR-107; CYS-110; PHE-117; CYS-123 AND CYS-127</scope>
    <scope>PUTATIVE CONTRACEPTIVE TARGET</scope>
</reference>
<evidence type="ECO:0000250" key="1"/>
<evidence type="ECO:0000255" key="2"/>
<evidence type="ECO:0000255" key="3">
    <source>
        <dbReference type="PROSITE-ProRule" id="PRU00031"/>
    </source>
</evidence>
<evidence type="ECO:0000255" key="4">
    <source>
        <dbReference type="PROSITE-ProRule" id="PRU00722"/>
    </source>
</evidence>
<evidence type="ECO:0000269" key="5">
    <source>
    </source>
</evidence>
<evidence type="ECO:0000269" key="6">
    <source>
    </source>
</evidence>
<evidence type="ECO:0000269" key="7">
    <source>
    </source>
</evidence>
<evidence type="ECO:0000269" key="8">
    <source>
    </source>
</evidence>
<evidence type="ECO:0000269" key="9">
    <source>
    </source>
</evidence>
<evidence type="ECO:0000269" key="10">
    <source>
    </source>
</evidence>
<evidence type="ECO:0000269" key="11">
    <source>
    </source>
</evidence>
<evidence type="ECO:0000269" key="12">
    <source>
    </source>
</evidence>
<evidence type="ECO:0000303" key="13">
    <source>
    </source>
</evidence>
<evidence type="ECO:0000303" key="14">
    <source>
    </source>
</evidence>
<evidence type="ECO:0000305" key="15"/>
<evidence type="ECO:0000305" key="16">
    <source>
    </source>
</evidence>
<name>EPPI_HUMAN</name>
<protein>
    <recommendedName>
        <fullName>Eppin</fullName>
    </recommendedName>
    <alternativeName>
        <fullName>Cancer/testis antigen 71</fullName>
        <shortName>CT71</shortName>
    </alternativeName>
    <alternativeName>
        <fullName>Epididymal protease inhibitor</fullName>
    </alternativeName>
    <alternativeName>
        <fullName>Protease inhibitor WAP7</fullName>
    </alternativeName>
    <alternativeName>
        <fullName>Serine protease inhibitor-like with Kunitz and WAP domains 1</fullName>
    </alternativeName>
    <alternativeName>
        <fullName>WAP four-disulfide core domain protein 7</fullName>
    </alternativeName>
</protein>
<comment type="function">
    <text evidence="6 9">Serine protease inhibitor that plays an essential role in male reproduction and fertility. Modulates the hydrolysis of SEMG1 by KLK3/PSA (a serine protease), provides antimicrobial protection for spermatozoa in the ejaculate coagulum, and binds SEMG1 thereby inhibiting sperm motility.</text>
</comment>
<comment type="subunit">
    <text evidence="5 7 8 12">Monomer. Homodimer. Homomultimers. Interacts with SEMG1 (via 164-283 AA). Interacts with LTF. Found in a complex with LTF, CLU, EPPIN and SEMG1.</text>
</comment>
<comment type="subcellular location">
    <molecule>Isoform 1</molecule>
    <subcellularLocation>
        <location>Secreted</location>
    </subcellularLocation>
    <subcellularLocation>
        <location>Cell surface</location>
    </subcellularLocation>
    <text>Bound to the surface of testicular and on the head and tail of ejaculate spermatozoa.</text>
</comment>
<comment type="alternative products">
    <event type="alternative splicing"/>
    <isoform>
        <id>O95925-1</id>
        <name>1</name>
        <sequence type="displayed"/>
    </isoform>
    <isoform>
        <id>O95925-2</id>
        <name>2</name>
        <name>Eppin-2</name>
        <sequence type="described" ref="VSP_006755"/>
    </isoform>
    <isoform>
        <id>O95925-3</id>
        <name>3</name>
        <sequence type="described" ref="VSP_043679"/>
    </isoform>
</comment>
<comment type="tissue specificity">
    <text evidence="5 11">In testis, expressed and secreted by Sertoli cells, appearing on the surface of testicular and ejaculate spermatozoa. Expressed in the spermatogonia and the earliest preleptotene spermatocytes. In the epididymis, is expressed and secreted by epithelial cells and covers the surface of epididymal spermatozoa and ciliated epithelial cells (at protein level). Expressed specifically in epididymis and testis. Isoform 2 is expressed only in the epididymis. Weak expression is detected in myoid cells as well as spermatogenic cells.</text>
</comment>
<comment type="domain">
    <text evidence="10">The BPTI/Kunitz inhibitor domain is required for elastase inhibitory activity. BPTI/Kunitz inhibitor and WAP domains are involved in the protein antibacterial activity.</text>
</comment>
<comment type="miscellaneous">
    <text evidence="16">Might be used as a target for male contraception.</text>
</comment>
<comment type="miscellaneous">
    <molecule>Isoform 2</molecule>
    <text evidence="15">Lacks a cleavable signal sequence.</text>
</comment>
<comment type="miscellaneous">
    <molecule>Isoform 3</molecule>
    <text evidence="15">Based on a readthrough transcript which may produce a EPPIN-WFDC6 fusion protein.</text>
</comment>
<gene>
    <name type="primary">EPPIN</name>
    <name type="synonym">SPINLW1</name>
    <name type="synonym">WAP7</name>
    <name type="synonym">WFDC7</name>
</gene>
<proteinExistence type="evidence at protein level"/>
<feature type="signal peptide" evidence="2">
    <location>
        <begin position="1"/>
        <end position="21"/>
    </location>
</feature>
<feature type="chain" id="PRO_0000041378" description="Eppin">
    <location>
        <begin position="22"/>
        <end position="133"/>
    </location>
</feature>
<feature type="domain" description="WAP" evidence="4">
    <location>
        <begin position="26"/>
        <end position="73"/>
    </location>
</feature>
<feature type="domain" description="BPTI/Kunitz inhibitor" evidence="3">
    <location>
        <begin position="77"/>
        <end position="127"/>
    </location>
</feature>
<feature type="region of interest" description="Interaction with SEMG1">
    <location>
        <begin position="102"/>
        <end position="133"/>
    </location>
</feature>
<feature type="region of interest" description="Interaction with LTF" evidence="12">
    <location>
        <begin position="117"/>
        <end position="133"/>
    </location>
</feature>
<feature type="disulfide bond" evidence="1">
    <location>
        <begin position="33"/>
        <end position="61"/>
    </location>
</feature>
<feature type="disulfide bond" evidence="1">
    <location>
        <begin position="40"/>
        <end position="65"/>
    </location>
</feature>
<feature type="disulfide bond" evidence="1">
    <location>
        <begin position="48"/>
        <end position="60"/>
    </location>
</feature>
<feature type="disulfide bond" evidence="1">
    <location>
        <begin position="54"/>
        <end position="69"/>
    </location>
</feature>
<feature type="disulfide bond" evidence="1">
    <location>
        <begin position="77"/>
        <end position="127"/>
    </location>
</feature>
<feature type="disulfide bond" evidence="1">
    <location>
        <begin position="86"/>
        <end position="110"/>
    </location>
</feature>
<feature type="disulfide bond" evidence="1">
    <location>
        <begin position="102"/>
        <end position="123"/>
    </location>
</feature>
<feature type="splice variant" id="VSP_006755" description="In isoform 2." evidence="13">
    <original>MGSSGLLSLLVLFVLLANVQGPGLTDWLFPR</original>
    <variation>MLSKAHGCKTALSLG</variation>
    <location>
        <begin position="1"/>
        <end position="31"/>
    </location>
</feature>
<feature type="splice variant" id="VSP_043679" description="In isoform 3." evidence="14">
    <original>RFP</original>
    <variation>QPCPKIKVECEVEEIDQCTKPRDCPENMKCCPFSRGKKCLDFRKASLST</variation>
    <location>
        <begin position="131"/>
        <end position="133"/>
    </location>
</feature>
<feature type="sequence variant" id="VAR_024696" description="In dbSNP:rs2231838.">
    <original>H</original>
    <variation>R</variation>
    <location>
        <position position="92"/>
    </location>
</feature>
<feature type="sequence variant" id="VAR_052950" description="In dbSNP:rs2231839.">
    <original>K</original>
    <variation>T</variation>
    <location>
        <position position="128"/>
    </location>
</feature>
<feature type="mutagenesis site" description="Loss of effect on KLK3 activity." evidence="9">
    <original>L</original>
    <variation>G</variation>
    <location>
        <position position="87"/>
    </location>
</feature>
<feature type="mutagenesis site" description="Reduces the binding to SEMG1 by 45%." evidence="12">
    <original>C</original>
    <variation>A</variation>
    <location>
        <position position="102"/>
    </location>
</feature>
<feature type="mutagenesis site" description="Reduces the binding to SEMG1 by 68%." evidence="12">
    <original>Y</original>
    <variation>A</variation>
    <location>
        <position position="107"/>
    </location>
</feature>
<feature type="mutagenesis site" description="Does not affect the binding of SEMG1 or LTF. Does not affect the binding of SEMG1; when associated with A-123 and A-127." evidence="12">
    <original>C</original>
    <variation>A</variation>
    <location>
        <position position="110"/>
    </location>
</feature>
<feature type="mutagenesis site" description="Reduces the binding to SEMG1 by 68% and to LTF by 73%." evidence="12">
    <original>F</original>
    <variation>A</variation>
    <location>
        <position position="117"/>
    </location>
</feature>
<feature type="mutagenesis site" description="Does not affect the binding of SEMG1 or LTF. Does not affect the binding of SEMG1; when associated with A-110 and A-127." evidence="12">
    <original>C</original>
    <variation>A</variation>
    <location>
        <position position="123"/>
    </location>
</feature>
<feature type="mutagenesis site" description="Does not affect the binding of SEMG1 or LTF. Does not affect the binding of SEMG1; when associated with A-110 and A-123." evidence="12">
    <original>C</original>
    <variation>A</variation>
    <location>
        <position position="127"/>
    </location>
</feature>